<dbReference type="EMBL" id="AC137993">
    <property type="protein sequence ID" value="AAX95891.1"/>
    <property type="molecule type" value="Genomic_DNA"/>
</dbReference>
<dbReference type="EMBL" id="AC145809">
    <property type="protein sequence ID" value="AAX92883.1"/>
    <property type="molecule type" value="Genomic_DNA"/>
</dbReference>
<dbReference type="EMBL" id="DP000010">
    <property type="protein sequence ID" value="ABA92262.1"/>
    <property type="molecule type" value="Genomic_DNA"/>
</dbReference>
<dbReference type="EMBL" id="AP014967">
    <property type="protein sequence ID" value="BAT13368.1"/>
    <property type="molecule type" value="Genomic_DNA"/>
</dbReference>
<dbReference type="RefSeq" id="XP_015616186.1">
    <property type="nucleotide sequence ID" value="XM_015760700.1"/>
</dbReference>
<dbReference type="SMR" id="Q53KS8"/>
<dbReference type="FunCoup" id="Q53KS8">
    <property type="interactions" value="283"/>
</dbReference>
<dbReference type="STRING" id="39947.Q53KS8"/>
<dbReference type="PaxDb" id="39947-Q53KS8"/>
<dbReference type="EnsemblPlants" id="Os11t0239000-00">
    <property type="protein sequence ID" value="Os11t0239000-00"/>
    <property type="gene ID" value="Os11g0239000"/>
</dbReference>
<dbReference type="Gramene" id="Os11t0239000-00">
    <property type="protein sequence ID" value="Os11t0239000-00"/>
    <property type="gene ID" value="Os11g0239000"/>
</dbReference>
<dbReference type="eggNOG" id="KOG2392">
    <property type="taxonomic scope" value="Eukaryota"/>
</dbReference>
<dbReference type="HOGENOM" id="CLU_023330_4_2_1"/>
<dbReference type="InParanoid" id="Q53KS8"/>
<dbReference type="OMA" id="DSCCKFY"/>
<dbReference type="Proteomes" id="UP000000763">
    <property type="component" value="Chromosome 11"/>
</dbReference>
<dbReference type="Proteomes" id="UP000059680">
    <property type="component" value="Chromosome 11"/>
</dbReference>
<dbReference type="GO" id="GO:0005615">
    <property type="term" value="C:extracellular space"/>
    <property type="evidence" value="ECO:0000318"/>
    <property type="project" value="GO_Central"/>
</dbReference>
<dbReference type="GO" id="GO:0004867">
    <property type="term" value="F:serine-type endopeptidase inhibitor activity"/>
    <property type="evidence" value="ECO:0007669"/>
    <property type="project" value="UniProtKB-KW"/>
</dbReference>
<dbReference type="CDD" id="cd02043">
    <property type="entry name" value="serpinP_plants"/>
    <property type="match status" value="1"/>
</dbReference>
<dbReference type="Gene3D" id="2.30.39.10">
    <property type="entry name" value="Alpha-1-antitrypsin, domain 1"/>
    <property type="match status" value="1"/>
</dbReference>
<dbReference type="Gene3D" id="3.30.497.10">
    <property type="entry name" value="Antithrombin, subunit I, domain 2"/>
    <property type="match status" value="1"/>
</dbReference>
<dbReference type="InterPro" id="IPR023796">
    <property type="entry name" value="Serpin_dom"/>
</dbReference>
<dbReference type="InterPro" id="IPR000215">
    <property type="entry name" value="Serpin_fam"/>
</dbReference>
<dbReference type="InterPro" id="IPR036186">
    <property type="entry name" value="Serpin_sf"/>
</dbReference>
<dbReference type="InterPro" id="IPR042178">
    <property type="entry name" value="Serpin_sf_1"/>
</dbReference>
<dbReference type="InterPro" id="IPR042185">
    <property type="entry name" value="Serpin_sf_2"/>
</dbReference>
<dbReference type="PANTHER" id="PTHR11461">
    <property type="entry name" value="SERINE PROTEASE INHIBITOR, SERPIN"/>
    <property type="match status" value="1"/>
</dbReference>
<dbReference type="PANTHER" id="PTHR11461:SF209">
    <property type="entry name" value="SERPIN-Z8-RELATED"/>
    <property type="match status" value="1"/>
</dbReference>
<dbReference type="Pfam" id="PF00079">
    <property type="entry name" value="Serpin"/>
    <property type="match status" value="2"/>
</dbReference>
<dbReference type="SMART" id="SM00093">
    <property type="entry name" value="SERPIN"/>
    <property type="match status" value="1"/>
</dbReference>
<dbReference type="SUPFAM" id="SSF56574">
    <property type="entry name" value="Serpins"/>
    <property type="match status" value="1"/>
</dbReference>
<name>SPZ2A_ORYSJ</name>
<reference key="1">
    <citation type="journal article" date="2005" name="BMC Biol.">
        <title>The sequence of rice chromosomes 11 and 12, rich in disease resistance genes and recent gene duplications.</title>
        <authorList>
            <consortium name="The rice chromosomes 11 and 12 sequencing consortia"/>
        </authorList>
    </citation>
    <scope>NUCLEOTIDE SEQUENCE [LARGE SCALE GENOMIC DNA]</scope>
    <source>
        <strain>cv. Nipponbare</strain>
    </source>
</reference>
<reference key="2">
    <citation type="journal article" date="2005" name="Nature">
        <title>The map-based sequence of the rice genome.</title>
        <authorList>
            <consortium name="International rice genome sequencing project (IRGSP)"/>
        </authorList>
    </citation>
    <scope>NUCLEOTIDE SEQUENCE [LARGE SCALE GENOMIC DNA]</scope>
    <source>
        <strain>cv. Nipponbare</strain>
    </source>
</reference>
<reference key="3">
    <citation type="journal article" date="2013" name="Rice">
        <title>Improvement of the Oryza sativa Nipponbare reference genome using next generation sequence and optical map data.</title>
        <authorList>
            <person name="Kawahara Y."/>
            <person name="de la Bastide M."/>
            <person name="Hamilton J.P."/>
            <person name="Kanamori H."/>
            <person name="McCombie W.R."/>
            <person name="Ouyang S."/>
            <person name="Schwartz D.C."/>
            <person name="Tanaka T."/>
            <person name="Wu J."/>
            <person name="Zhou S."/>
            <person name="Childs K.L."/>
            <person name="Davidson R.M."/>
            <person name="Lin H."/>
            <person name="Quesada-Ocampo L."/>
            <person name="Vaillancourt B."/>
            <person name="Sakai H."/>
            <person name="Lee S.S."/>
            <person name="Kim J."/>
            <person name="Numa H."/>
            <person name="Itoh T."/>
            <person name="Buell C.R."/>
            <person name="Matsumoto T."/>
        </authorList>
    </citation>
    <scope>GENOME REANNOTATION</scope>
    <source>
        <strain>cv. Nipponbare</strain>
    </source>
</reference>
<reference key="4">
    <citation type="journal article" date="2008" name="Funct. Integr. Genomics">
        <title>Serpins in plants and green algae.</title>
        <authorList>
            <person name="Roberts T.H."/>
            <person name="Hejgaard J."/>
        </authorList>
    </citation>
    <scope>GENE FAMILY</scope>
    <scope>NOMENCLATURE</scope>
</reference>
<comment type="function">
    <text evidence="1">Probable serine protease inhibitor.</text>
</comment>
<comment type="domain">
    <text evidence="1">The reactive center loop (RCL) extends out from the body of the protein and directs binding to the target protease. The protease cleaves the serpin at the reactive site within the RCL, establishing a covalent linkage between the carboxyl group of the serpin reactive site and the serine hydroxyl of the protease. The resulting inactive serpin-protease complex is highly stable (By similarity).</text>
</comment>
<comment type="similarity">
    <text evidence="3">Belongs to the serpin family.</text>
</comment>
<organism>
    <name type="scientific">Oryza sativa subsp. japonica</name>
    <name type="common">Rice</name>
    <dbReference type="NCBI Taxonomy" id="39947"/>
    <lineage>
        <taxon>Eukaryota</taxon>
        <taxon>Viridiplantae</taxon>
        <taxon>Streptophyta</taxon>
        <taxon>Embryophyta</taxon>
        <taxon>Tracheophyta</taxon>
        <taxon>Spermatophyta</taxon>
        <taxon>Magnoliopsida</taxon>
        <taxon>Liliopsida</taxon>
        <taxon>Poales</taxon>
        <taxon>Poaceae</taxon>
        <taxon>BOP clade</taxon>
        <taxon>Oryzoideae</taxon>
        <taxon>Oryzeae</taxon>
        <taxon>Oryzinae</taxon>
        <taxon>Oryza</taxon>
        <taxon>Oryza sativa</taxon>
    </lineage>
</organism>
<evidence type="ECO:0000250" key="1"/>
<evidence type="ECO:0000255" key="2"/>
<evidence type="ECO:0000305" key="3"/>
<sequence>MEDNAGDCGGMTAFALRLAKRLADVGVSSNKNLVFSPASLYAALALVAAGARGTTLDELLALLGAASLDDLEESVRRAVEVGLADESASGGPRVSDACGVWHDETLELKPAYRAAAAGTYKAVTRAANFQRQPKRSRKKINKWVSKATNKLIPEILPDGSVHVDTALVLVNAIYFKGKWSNPFPRSSTTTGKFHRLDGSSVDVPFMSSREDQYIGFHDGFTVLKLPYHHRTMKNHGDGGDTITNSSITRAILEHYGGENVGLSMYIFLPDERDGLPALVDKMAASSSSSSFLRDHRPTRRREVGDLRVPRFKVSFYSQINGVLQGMGVTAAFDAGEADLSGMAEGVDQRGGGLVVEEVFHRAVVEVNEEGTEAAASTACTIRLLSMSYPEDFVADHPFAFFVVEETSGAVLFAGHVLDPTSSSE</sequence>
<gene>
    <name type="ordered locus">Os11g0239000</name>
    <name type="ordered locus">LOC_Os11g13530</name>
</gene>
<keyword id="KW-0646">Protease inhibitor</keyword>
<keyword id="KW-1185">Reference proteome</keyword>
<keyword id="KW-0722">Serine protease inhibitor</keyword>
<protein>
    <recommendedName>
        <fullName>Serpin-Z2A</fullName>
    </recommendedName>
    <alternativeName>
        <fullName>OrysaZ2a</fullName>
    </alternativeName>
</protein>
<proteinExistence type="inferred from homology"/>
<feature type="chain" id="PRO_0000334554" description="Serpin-Z2A">
    <location>
        <begin position="1"/>
        <end position="424"/>
    </location>
</feature>
<feature type="region of interest" description="RCL">
    <location>
        <begin position="370"/>
        <end position="394"/>
    </location>
</feature>
<feature type="site" description="Reactive bond" evidence="2">
    <location>
        <begin position="384"/>
        <end position="385"/>
    </location>
</feature>
<accession>Q53KS8</accession>
<accession>A0A0P0Y0J6</accession>